<proteinExistence type="inferred from homology"/>
<reference key="1">
    <citation type="journal article" date="2003" name="Nature">
        <title>The genome of a motile marine Synechococcus.</title>
        <authorList>
            <person name="Palenik B."/>
            <person name="Brahamsha B."/>
            <person name="Larimer F.W."/>
            <person name="Land M.L."/>
            <person name="Hauser L."/>
            <person name="Chain P."/>
            <person name="Lamerdin J.E."/>
            <person name="Regala W."/>
            <person name="Allen E.E."/>
            <person name="McCarren J."/>
            <person name="Paulsen I.T."/>
            <person name="Dufresne A."/>
            <person name="Partensky F."/>
            <person name="Webb E.A."/>
            <person name="Waterbury J."/>
        </authorList>
    </citation>
    <scope>NUCLEOTIDE SEQUENCE [LARGE SCALE GENOMIC DNA]</scope>
    <source>
        <strain>WH8102</strain>
    </source>
</reference>
<accession>Q7U406</accession>
<evidence type="ECO:0000255" key="1">
    <source>
        <dbReference type="HAMAP-Rule" id="MF_00361"/>
    </source>
</evidence>
<evidence type="ECO:0000256" key="2">
    <source>
        <dbReference type="SAM" id="MobiDB-lite"/>
    </source>
</evidence>
<keyword id="KW-0067">ATP-binding</keyword>
<keyword id="KW-0963">Cytoplasm</keyword>
<keyword id="KW-0418">Kinase</keyword>
<keyword id="KW-0520">NAD</keyword>
<keyword id="KW-0521">NADP</keyword>
<keyword id="KW-0547">Nucleotide-binding</keyword>
<keyword id="KW-0808">Transferase</keyword>
<gene>
    <name evidence="1" type="primary">nadK1</name>
    <name type="ordered locus">SYNW2270</name>
</gene>
<name>NADK1_PARMW</name>
<dbReference type="EC" id="2.7.1.23" evidence="1"/>
<dbReference type="EMBL" id="BX569695">
    <property type="protein sequence ID" value="CAE08785.1"/>
    <property type="molecule type" value="Genomic_DNA"/>
</dbReference>
<dbReference type="RefSeq" id="WP_011129123.1">
    <property type="nucleotide sequence ID" value="NC_005070.1"/>
</dbReference>
<dbReference type="SMR" id="Q7U406"/>
<dbReference type="STRING" id="84588.SYNW2270"/>
<dbReference type="KEGG" id="syw:SYNW2270"/>
<dbReference type="eggNOG" id="COG0061">
    <property type="taxonomic scope" value="Bacteria"/>
</dbReference>
<dbReference type="HOGENOM" id="CLU_008831_0_1_3"/>
<dbReference type="Proteomes" id="UP000001422">
    <property type="component" value="Chromosome"/>
</dbReference>
<dbReference type="GO" id="GO:0005737">
    <property type="term" value="C:cytoplasm"/>
    <property type="evidence" value="ECO:0007669"/>
    <property type="project" value="UniProtKB-SubCell"/>
</dbReference>
<dbReference type="GO" id="GO:0005524">
    <property type="term" value="F:ATP binding"/>
    <property type="evidence" value="ECO:0007669"/>
    <property type="project" value="UniProtKB-KW"/>
</dbReference>
<dbReference type="GO" id="GO:0046872">
    <property type="term" value="F:metal ion binding"/>
    <property type="evidence" value="ECO:0007669"/>
    <property type="project" value="UniProtKB-UniRule"/>
</dbReference>
<dbReference type="GO" id="GO:0051287">
    <property type="term" value="F:NAD binding"/>
    <property type="evidence" value="ECO:0007669"/>
    <property type="project" value="UniProtKB-ARBA"/>
</dbReference>
<dbReference type="GO" id="GO:0003951">
    <property type="term" value="F:NAD+ kinase activity"/>
    <property type="evidence" value="ECO:0007669"/>
    <property type="project" value="UniProtKB-UniRule"/>
</dbReference>
<dbReference type="GO" id="GO:0019674">
    <property type="term" value="P:NAD metabolic process"/>
    <property type="evidence" value="ECO:0007669"/>
    <property type="project" value="InterPro"/>
</dbReference>
<dbReference type="GO" id="GO:0006741">
    <property type="term" value="P:NADP biosynthetic process"/>
    <property type="evidence" value="ECO:0007669"/>
    <property type="project" value="UniProtKB-UniRule"/>
</dbReference>
<dbReference type="Gene3D" id="3.40.50.10330">
    <property type="entry name" value="Probable inorganic polyphosphate/atp-NAD kinase, domain 1"/>
    <property type="match status" value="1"/>
</dbReference>
<dbReference type="Gene3D" id="2.60.200.30">
    <property type="entry name" value="Probable inorganic polyphosphate/atp-NAD kinase, domain 2"/>
    <property type="match status" value="1"/>
</dbReference>
<dbReference type="HAMAP" id="MF_00361">
    <property type="entry name" value="NAD_kinase"/>
    <property type="match status" value="1"/>
</dbReference>
<dbReference type="InterPro" id="IPR017438">
    <property type="entry name" value="ATP-NAD_kinase_N"/>
</dbReference>
<dbReference type="InterPro" id="IPR017437">
    <property type="entry name" value="ATP-NAD_kinase_PpnK-typ_C"/>
</dbReference>
<dbReference type="InterPro" id="IPR016064">
    <property type="entry name" value="NAD/diacylglycerol_kinase_sf"/>
</dbReference>
<dbReference type="InterPro" id="IPR002504">
    <property type="entry name" value="NADK"/>
</dbReference>
<dbReference type="NCBIfam" id="NF002731">
    <property type="entry name" value="PRK02645.1"/>
    <property type="match status" value="1"/>
</dbReference>
<dbReference type="PANTHER" id="PTHR20275">
    <property type="entry name" value="NAD KINASE"/>
    <property type="match status" value="1"/>
</dbReference>
<dbReference type="PANTHER" id="PTHR20275:SF0">
    <property type="entry name" value="NAD KINASE"/>
    <property type="match status" value="1"/>
</dbReference>
<dbReference type="Pfam" id="PF01513">
    <property type="entry name" value="NAD_kinase"/>
    <property type="match status" value="1"/>
</dbReference>
<dbReference type="Pfam" id="PF20143">
    <property type="entry name" value="NAD_kinase_C"/>
    <property type="match status" value="1"/>
</dbReference>
<dbReference type="SUPFAM" id="SSF111331">
    <property type="entry name" value="NAD kinase/diacylglycerol kinase-like"/>
    <property type="match status" value="1"/>
</dbReference>
<sequence length="316" mass="34715">MRLDRVWVIYRADSQPAQREARQCAKELKALGSEVTTAMSGARVNPFPGLLATQEQLPDLAVVLGGDGTVLGAARHLAVHDIPILSINVGGHLGFLTHDRRVLRGDEIWQRLLNDQYAMERRMMLQAMVDRRSAEERADAPTPLQQPDVEDDDEHHWALNDFYLRAYRDEISPTCTLELEIDGEVVDQIRGDGLILSTPTGSTGYALAAGGPILHPGIDAIVVAPICPMSLSSRTVVVPPRARLVIWPLGAGDHRIKLWKDGVGCTVLEPGECCVVQQARHHAQMVQLNQSPSYYRTVASKLHWAGSLTAAQPSHN</sequence>
<comment type="function">
    <text evidence="1">Involved in the regulation of the intracellular balance of NAD and NADP, and is a key enzyme in the biosynthesis of NADP. Catalyzes specifically the phosphorylation on 2'-hydroxyl of the adenosine moiety of NAD to yield NADP.</text>
</comment>
<comment type="catalytic activity">
    <reaction evidence="1">
        <text>NAD(+) + ATP = ADP + NADP(+) + H(+)</text>
        <dbReference type="Rhea" id="RHEA:18629"/>
        <dbReference type="ChEBI" id="CHEBI:15378"/>
        <dbReference type="ChEBI" id="CHEBI:30616"/>
        <dbReference type="ChEBI" id="CHEBI:57540"/>
        <dbReference type="ChEBI" id="CHEBI:58349"/>
        <dbReference type="ChEBI" id="CHEBI:456216"/>
        <dbReference type="EC" id="2.7.1.23"/>
    </reaction>
</comment>
<comment type="cofactor">
    <cofactor evidence="1">
        <name>a divalent metal cation</name>
        <dbReference type="ChEBI" id="CHEBI:60240"/>
    </cofactor>
</comment>
<comment type="subcellular location">
    <subcellularLocation>
        <location evidence="1">Cytoplasm</location>
    </subcellularLocation>
</comment>
<comment type="similarity">
    <text evidence="1">Belongs to the NAD kinase family.</text>
</comment>
<organism>
    <name type="scientific">Parasynechococcus marenigrum (strain WH8102)</name>
    <dbReference type="NCBI Taxonomy" id="84588"/>
    <lineage>
        <taxon>Bacteria</taxon>
        <taxon>Bacillati</taxon>
        <taxon>Cyanobacteriota</taxon>
        <taxon>Cyanophyceae</taxon>
        <taxon>Synechococcales</taxon>
        <taxon>Prochlorococcaceae</taxon>
        <taxon>Parasynechococcus</taxon>
        <taxon>Parasynechococcus marenigrum</taxon>
    </lineage>
</organism>
<feature type="chain" id="PRO_0000229704" description="NAD kinase 1">
    <location>
        <begin position="1"/>
        <end position="316"/>
    </location>
</feature>
<feature type="region of interest" description="Disordered" evidence="2">
    <location>
        <begin position="132"/>
        <end position="151"/>
    </location>
</feature>
<feature type="active site" description="Proton acceptor" evidence="1">
    <location>
        <position position="67"/>
    </location>
</feature>
<feature type="binding site" evidence="1">
    <location>
        <begin position="67"/>
        <end position="68"/>
    </location>
    <ligand>
        <name>NAD(+)</name>
        <dbReference type="ChEBI" id="CHEBI:57540"/>
    </ligand>
</feature>
<feature type="binding site" evidence="1">
    <location>
        <begin position="160"/>
        <end position="161"/>
    </location>
    <ligand>
        <name>NAD(+)</name>
        <dbReference type="ChEBI" id="CHEBI:57540"/>
    </ligand>
</feature>
<feature type="binding site" evidence="1">
    <location>
        <position position="190"/>
    </location>
    <ligand>
        <name>NAD(+)</name>
        <dbReference type="ChEBI" id="CHEBI:57540"/>
    </ligand>
</feature>
<feature type="binding site" evidence="1">
    <location>
        <position position="192"/>
    </location>
    <ligand>
        <name>NAD(+)</name>
        <dbReference type="ChEBI" id="CHEBI:57540"/>
    </ligand>
</feature>
<protein>
    <recommendedName>
        <fullName evidence="1">NAD kinase 1</fullName>
        <ecNumber evidence="1">2.7.1.23</ecNumber>
    </recommendedName>
    <alternativeName>
        <fullName evidence="1">ATP-dependent NAD kinase 1</fullName>
    </alternativeName>
</protein>